<accession>A1UMH9</accession>
<feature type="chain" id="PRO_0000307025" description="Aspartate 1-decarboxylase beta chain" evidence="1">
    <location>
        <begin position="1"/>
        <end position="24"/>
    </location>
</feature>
<feature type="chain" id="PRO_0000307026" description="Aspartate 1-decarboxylase alpha chain" evidence="1">
    <location>
        <begin position="25"/>
        <end position="135"/>
    </location>
</feature>
<feature type="active site" description="Schiff-base intermediate with substrate; via pyruvic acid" evidence="1">
    <location>
        <position position="25"/>
    </location>
</feature>
<feature type="active site" description="Proton donor" evidence="1">
    <location>
        <position position="58"/>
    </location>
</feature>
<feature type="binding site" evidence="1">
    <location>
        <position position="57"/>
    </location>
    <ligand>
        <name>substrate</name>
    </ligand>
</feature>
<feature type="binding site" evidence="1">
    <location>
        <begin position="73"/>
        <end position="75"/>
    </location>
    <ligand>
        <name>substrate</name>
    </ligand>
</feature>
<feature type="modified residue" description="Pyruvic acid (Ser)" evidence="1">
    <location>
        <position position="25"/>
    </location>
</feature>
<comment type="function">
    <text evidence="1">Catalyzes the pyruvoyl-dependent decarboxylation of aspartate to produce beta-alanine.</text>
</comment>
<comment type="catalytic activity">
    <reaction evidence="1">
        <text>L-aspartate + H(+) = beta-alanine + CO2</text>
        <dbReference type="Rhea" id="RHEA:19497"/>
        <dbReference type="ChEBI" id="CHEBI:15378"/>
        <dbReference type="ChEBI" id="CHEBI:16526"/>
        <dbReference type="ChEBI" id="CHEBI:29991"/>
        <dbReference type="ChEBI" id="CHEBI:57966"/>
        <dbReference type="EC" id="4.1.1.11"/>
    </reaction>
</comment>
<comment type="cofactor">
    <cofactor evidence="1">
        <name>pyruvate</name>
        <dbReference type="ChEBI" id="CHEBI:15361"/>
    </cofactor>
    <text evidence="1">Binds 1 pyruvoyl group covalently per subunit.</text>
</comment>
<comment type="pathway">
    <text evidence="1">Cofactor biosynthesis; (R)-pantothenate biosynthesis; beta-alanine from L-aspartate: step 1/1.</text>
</comment>
<comment type="subunit">
    <text evidence="1">Heterooctamer of four alpha and four beta subunits.</text>
</comment>
<comment type="subcellular location">
    <subcellularLocation>
        <location evidence="1">Cytoplasm</location>
    </subcellularLocation>
</comment>
<comment type="PTM">
    <text evidence="1">Is synthesized initially as an inactive proenzyme, which is activated by self-cleavage at a specific serine bond to produce a beta-subunit with a hydroxyl group at its C-terminus and an alpha-subunit with a pyruvoyl group at its N-terminus.</text>
</comment>
<comment type="similarity">
    <text evidence="1">Belongs to the PanD family.</text>
</comment>
<evidence type="ECO:0000255" key="1">
    <source>
        <dbReference type="HAMAP-Rule" id="MF_00446"/>
    </source>
</evidence>
<organism>
    <name type="scientific">Mycobacterium sp. (strain KMS)</name>
    <dbReference type="NCBI Taxonomy" id="189918"/>
    <lineage>
        <taxon>Bacteria</taxon>
        <taxon>Bacillati</taxon>
        <taxon>Actinomycetota</taxon>
        <taxon>Actinomycetes</taxon>
        <taxon>Mycobacteriales</taxon>
        <taxon>Mycobacteriaceae</taxon>
        <taxon>Mycobacterium</taxon>
    </lineage>
</organism>
<dbReference type="EC" id="4.1.1.11" evidence="1"/>
<dbReference type="EMBL" id="CP000518">
    <property type="protein sequence ID" value="ABL94037.1"/>
    <property type="molecule type" value="Genomic_DNA"/>
</dbReference>
<dbReference type="SMR" id="A1UMH9"/>
<dbReference type="STRING" id="189918.Mkms_4847"/>
<dbReference type="KEGG" id="mkm:Mkms_4847"/>
<dbReference type="HOGENOM" id="CLU_115305_2_0_11"/>
<dbReference type="OrthoDB" id="9803983at2"/>
<dbReference type="UniPathway" id="UPA00028">
    <property type="reaction ID" value="UER00002"/>
</dbReference>
<dbReference type="GO" id="GO:0005829">
    <property type="term" value="C:cytosol"/>
    <property type="evidence" value="ECO:0007669"/>
    <property type="project" value="TreeGrafter"/>
</dbReference>
<dbReference type="GO" id="GO:0004068">
    <property type="term" value="F:aspartate 1-decarboxylase activity"/>
    <property type="evidence" value="ECO:0007669"/>
    <property type="project" value="UniProtKB-UniRule"/>
</dbReference>
<dbReference type="GO" id="GO:0006523">
    <property type="term" value="P:alanine biosynthetic process"/>
    <property type="evidence" value="ECO:0007669"/>
    <property type="project" value="InterPro"/>
</dbReference>
<dbReference type="GO" id="GO:0015940">
    <property type="term" value="P:pantothenate biosynthetic process"/>
    <property type="evidence" value="ECO:0007669"/>
    <property type="project" value="UniProtKB-UniRule"/>
</dbReference>
<dbReference type="CDD" id="cd06919">
    <property type="entry name" value="Asp_decarbox"/>
    <property type="match status" value="1"/>
</dbReference>
<dbReference type="Gene3D" id="2.40.40.20">
    <property type="match status" value="1"/>
</dbReference>
<dbReference type="HAMAP" id="MF_00446">
    <property type="entry name" value="PanD"/>
    <property type="match status" value="1"/>
</dbReference>
<dbReference type="InterPro" id="IPR009010">
    <property type="entry name" value="Asp_de-COase-like_dom_sf"/>
</dbReference>
<dbReference type="InterPro" id="IPR003190">
    <property type="entry name" value="Asp_decarbox"/>
</dbReference>
<dbReference type="NCBIfam" id="TIGR00223">
    <property type="entry name" value="panD"/>
    <property type="match status" value="1"/>
</dbReference>
<dbReference type="PANTHER" id="PTHR21012">
    <property type="entry name" value="ASPARTATE 1-DECARBOXYLASE"/>
    <property type="match status" value="1"/>
</dbReference>
<dbReference type="PANTHER" id="PTHR21012:SF0">
    <property type="entry name" value="ASPARTATE 1-DECARBOXYLASE"/>
    <property type="match status" value="1"/>
</dbReference>
<dbReference type="Pfam" id="PF02261">
    <property type="entry name" value="Asp_decarbox"/>
    <property type="match status" value="1"/>
</dbReference>
<dbReference type="PIRSF" id="PIRSF006246">
    <property type="entry name" value="Asp_decarbox"/>
    <property type="match status" value="1"/>
</dbReference>
<dbReference type="SUPFAM" id="SSF50692">
    <property type="entry name" value="ADC-like"/>
    <property type="match status" value="1"/>
</dbReference>
<gene>
    <name evidence="1" type="primary">panD</name>
    <name type="ordered locus">Mkms_4847</name>
</gene>
<reference key="1">
    <citation type="submission" date="2006-12" db="EMBL/GenBank/DDBJ databases">
        <title>Complete sequence of chromosome of Mycobacterium sp. KMS.</title>
        <authorList>
            <consortium name="US DOE Joint Genome Institute"/>
            <person name="Copeland A."/>
            <person name="Lucas S."/>
            <person name="Lapidus A."/>
            <person name="Barry K."/>
            <person name="Detter J.C."/>
            <person name="Glavina del Rio T."/>
            <person name="Hammon N."/>
            <person name="Israni S."/>
            <person name="Dalin E."/>
            <person name="Tice H."/>
            <person name="Pitluck S."/>
            <person name="Kiss H."/>
            <person name="Brettin T."/>
            <person name="Bruce D."/>
            <person name="Han C."/>
            <person name="Tapia R."/>
            <person name="Gilna P."/>
            <person name="Schmutz J."/>
            <person name="Larimer F."/>
            <person name="Land M."/>
            <person name="Hauser L."/>
            <person name="Kyrpides N."/>
            <person name="Mikhailova N."/>
            <person name="Miller C.D."/>
            <person name="Richardson P."/>
        </authorList>
    </citation>
    <scope>NUCLEOTIDE SEQUENCE [LARGE SCALE GENOMIC DNA]</scope>
    <source>
        <strain>KMS</strain>
    </source>
</reference>
<sequence>MLRTMLKSKIHRATVTQSDLHYVGSVTIDADLMDAADLIEGEQVTIVDIDNGNRLVTYAITGARGSGVIGINGAAAHLVHPGDLVILIAYGTMEDAEARAYQPRVVFVDADNRQVHLGADPAMVPDTAVDLMSPR</sequence>
<name>PAND_MYCSK</name>
<proteinExistence type="inferred from homology"/>
<protein>
    <recommendedName>
        <fullName evidence="1">Aspartate 1-decarboxylase</fullName>
        <ecNumber evidence="1">4.1.1.11</ecNumber>
    </recommendedName>
    <alternativeName>
        <fullName evidence="1">Aspartate alpha-decarboxylase</fullName>
    </alternativeName>
    <component>
        <recommendedName>
            <fullName evidence="1">Aspartate 1-decarboxylase beta chain</fullName>
        </recommendedName>
    </component>
    <component>
        <recommendedName>
            <fullName evidence="1">Aspartate 1-decarboxylase alpha chain</fullName>
        </recommendedName>
    </component>
</protein>
<keyword id="KW-0068">Autocatalytic cleavage</keyword>
<keyword id="KW-0963">Cytoplasm</keyword>
<keyword id="KW-0210">Decarboxylase</keyword>
<keyword id="KW-0456">Lyase</keyword>
<keyword id="KW-0566">Pantothenate biosynthesis</keyword>
<keyword id="KW-0670">Pyruvate</keyword>
<keyword id="KW-0704">Schiff base</keyword>
<keyword id="KW-0865">Zymogen</keyword>